<accession>B0E2U2</accession>
<proteinExistence type="inferred from homology"/>
<keyword id="KW-0325">Glycoprotein</keyword>
<keyword id="KW-0333">Golgi apparatus</keyword>
<keyword id="KW-0472">Membrane</keyword>
<keyword id="KW-0653">Protein transport</keyword>
<keyword id="KW-0675">Receptor</keyword>
<keyword id="KW-1185">Reference proteome</keyword>
<keyword id="KW-0677">Repeat</keyword>
<keyword id="KW-0732">Signal</keyword>
<keyword id="KW-0812">Transmembrane</keyword>
<keyword id="KW-1133">Transmembrane helix</keyword>
<keyword id="KW-0813">Transport</keyword>
<name>VPS10_LACBS</name>
<protein>
    <recommendedName>
        <fullName>Vacuolar protein sorting/targeting protein 10</fullName>
    </recommendedName>
    <alternativeName>
        <fullName>Carboxypeptidase Y receptor</fullName>
        <shortName>CPY receptor</shortName>
    </alternativeName>
    <alternativeName>
        <fullName>Sortilin VPS10</fullName>
    </alternativeName>
    <alternativeName>
        <fullName>Vacuolar carboxypeptidase sorting receptor VPS10</fullName>
    </alternativeName>
</protein>
<gene>
    <name type="primary">VPS10</name>
    <name type="ORF">LACBIDRAFT_192355</name>
</gene>
<evidence type="ECO:0000250" key="1"/>
<evidence type="ECO:0000255" key="2"/>
<evidence type="ECO:0000305" key="3"/>
<reference key="1">
    <citation type="journal article" date="2008" name="Nature">
        <title>The genome of Laccaria bicolor provides insights into mycorrhizal symbiosis.</title>
        <authorList>
            <person name="Martin F."/>
            <person name="Aerts A."/>
            <person name="Ahren D."/>
            <person name="Brun A."/>
            <person name="Danchin E.G.J."/>
            <person name="Duchaussoy F."/>
            <person name="Gibon J."/>
            <person name="Kohler A."/>
            <person name="Lindquist E."/>
            <person name="Pereda V."/>
            <person name="Salamov A."/>
            <person name="Shapiro H.J."/>
            <person name="Wuyts J."/>
            <person name="Blaudez D."/>
            <person name="Buee M."/>
            <person name="Brokstein P."/>
            <person name="Canbaeck B."/>
            <person name="Cohen D."/>
            <person name="Courty P.E."/>
            <person name="Coutinho P.M."/>
            <person name="Delaruelle C."/>
            <person name="Detter J.C."/>
            <person name="Deveau A."/>
            <person name="DiFazio S."/>
            <person name="Duplessis S."/>
            <person name="Fraissinet-Tachet L."/>
            <person name="Lucic E."/>
            <person name="Frey-Klett P."/>
            <person name="Fourrey C."/>
            <person name="Feussner I."/>
            <person name="Gay G."/>
            <person name="Grimwood J."/>
            <person name="Hoegger P.J."/>
            <person name="Jain P."/>
            <person name="Kilaru S."/>
            <person name="Labbe J."/>
            <person name="Lin Y.C."/>
            <person name="Legue V."/>
            <person name="Le Tacon F."/>
            <person name="Marmeisse R."/>
            <person name="Melayah D."/>
            <person name="Montanini B."/>
            <person name="Muratet M."/>
            <person name="Nehls U."/>
            <person name="Niculita-Hirzel H."/>
            <person name="Oudot-Le Secq M.P."/>
            <person name="Peter M."/>
            <person name="Quesneville H."/>
            <person name="Rajashekar B."/>
            <person name="Reich M."/>
            <person name="Rouhier N."/>
            <person name="Schmutz J."/>
            <person name="Yin T."/>
            <person name="Chalot M."/>
            <person name="Henrissat B."/>
            <person name="Kuees U."/>
            <person name="Lucas S."/>
            <person name="Van de Peer Y."/>
            <person name="Podila G.K."/>
            <person name="Polle A."/>
            <person name="Pukkila P.J."/>
            <person name="Richardson P.M."/>
            <person name="Rouze P."/>
            <person name="Sanders I.R."/>
            <person name="Stajich J.E."/>
            <person name="Tunlid A."/>
            <person name="Tuskan G."/>
            <person name="Grigoriev I.V."/>
        </authorList>
    </citation>
    <scope>NUCLEOTIDE SEQUENCE [LARGE SCALE GENOMIC DNA]</scope>
    <source>
        <strain>S238N-H82 / ATCC MYA-4686</strain>
    </source>
</reference>
<organism>
    <name type="scientific">Laccaria bicolor (strain S238N-H82 / ATCC MYA-4686)</name>
    <name type="common">Bicoloured deceiver</name>
    <name type="synonym">Laccaria laccata var. bicolor</name>
    <dbReference type="NCBI Taxonomy" id="486041"/>
    <lineage>
        <taxon>Eukaryota</taxon>
        <taxon>Fungi</taxon>
        <taxon>Dikarya</taxon>
        <taxon>Basidiomycota</taxon>
        <taxon>Agaricomycotina</taxon>
        <taxon>Agaricomycetes</taxon>
        <taxon>Agaricomycetidae</taxon>
        <taxon>Agaricales</taxon>
        <taxon>Agaricineae</taxon>
        <taxon>Hydnangiaceae</taxon>
        <taxon>Laccaria</taxon>
    </lineage>
</organism>
<feature type="signal peptide" evidence="2">
    <location>
        <begin position="1"/>
        <end position="31"/>
    </location>
</feature>
<feature type="chain" id="PRO_0000407520" description="Vacuolar protein sorting/targeting protein 10">
    <location>
        <begin position="32"/>
        <end position="1469"/>
    </location>
</feature>
<feature type="topological domain" description="Lumenal" evidence="2">
    <location>
        <begin position="32"/>
        <end position="1364"/>
    </location>
</feature>
<feature type="transmembrane region" description="Helical" evidence="2">
    <location>
        <begin position="1365"/>
        <end position="1385"/>
    </location>
</feature>
<feature type="topological domain" description="Cytoplasmic" evidence="2">
    <location>
        <begin position="1386"/>
        <end position="1412"/>
    </location>
</feature>
<feature type="transmembrane region" description="Helical" evidence="2">
    <location>
        <begin position="1413"/>
        <end position="1433"/>
    </location>
</feature>
<feature type="topological domain" description="Lumenal" evidence="2">
    <location>
        <begin position="1434"/>
        <end position="1469"/>
    </location>
</feature>
<feature type="repeat" description="BNR 1">
    <location>
        <begin position="69"/>
        <end position="80"/>
    </location>
</feature>
<feature type="repeat" description="BNR 2">
    <location>
        <begin position="112"/>
        <end position="122"/>
    </location>
</feature>
<feature type="repeat" description="BNR 3">
    <location>
        <begin position="393"/>
        <end position="403"/>
    </location>
</feature>
<feature type="repeat" description="BNR 4">
    <location>
        <begin position="471"/>
        <end position="481"/>
    </location>
</feature>
<feature type="repeat" description="BNR 5">
    <location>
        <begin position="512"/>
        <end position="521"/>
    </location>
</feature>
<feature type="repeat" description="BNR 6">
    <location>
        <begin position="784"/>
        <end position="793"/>
    </location>
</feature>
<feature type="repeat" description="BNR 7">
    <location>
        <begin position="839"/>
        <end position="850"/>
    </location>
</feature>
<feature type="repeat" description="BNR 8">
    <location>
        <begin position="1049"/>
        <end position="1058"/>
    </location>
</feature>
<feature type="repeat" description="BNR 9">
    <location>
        <begin position="1166"/>
        <end position="1175"/>
    </location>
</feature>
<feature type="glycosylation site" description="N-linked (GlcNAc...) asparagine" evidence="2">
    <location>
        <position position="339"/>
    </location>
</feature>
<feature type="glycosylation site" description="N-linked (GlcNAc...) asparagine" evidence="2">
    <location>
        <position position="995"/>
    </location>
</feature>
<sequence length="1469" mass="165379">MASTAKARYNVGLKLYTFLLLLLSLIALVLGQEQPVHTITPFNNLPARLFFFDDTEAAIYHDSIDGNVYVSQDEGKSWSMAEGIPKGKTVMVIEHPFDNRYAFALTDSKIHYRTEDRGKTWRSFEVPVPPALVARPMSFHSDPKKWGSILYQGTACNRQGWGAICHDETYYTKEAFSDTPQLLLSETSRCQFAHSSKDFKHEAHSDLIYCVAFDTSSVDGSHALSSSRLFSTTDFFDKDRKVEELGIGKNAKGVIAFAIVSKYAVVALKDLSPSNDGEMLLYVTVDTNTWAKAQFPHASSAKLRENAYTIVESTTHSLAVDVVLQDKSSIGTLFVSNSNGTFFVESLKDTNRNDMGYVDYEKLYGVDGVGLANVVSNAKDVEGRGARKQLKTMITFDDGTTWTSLRPPSQDSEGKRISCDPADTDLCSLHLHSVTTPHNYGRIFSSPAPGFAMGVGSIGESLLPYDESDTFISTDAGVTWQMVRRDAHKYEFGDKGSILVVVNDEDGTDNVRYSLDLGKSWLKYDIGIKFRARALMTLPDSTSQRFLLLGQVARKDQTKDTGRVVIIQLDFSGTRKRKCVEGDFEKWYARTSKTECLMGHKQWYKRRKPDADCYVGEKYMDPVEHEDNCQCTEEDYECDYNFVRNGKDCVPVGPEPIPAGVCTGNPDQTYKGSSGWRKIPGNTCVDGVKKDEKVDKKCSQAQPAPGEITHQIHDFKHQIVQHAYFKNPKVKTILVRLMDHTMWQSSNEGYSWTQIHPEHRFLAFYHHKYADDRAYLITDTDTFFYTTDTGRTWIRAKAPTPPNTFGAQVLHFHPNTDNLIWTGNRGCSAQAQSCHAEAQYSRDNGRKWSLIDSYVRNCAWAKDAELNTDPNEIICESYRDKKGNQRLFQNENPMELVTGSNYYANKRKVFDHVVGFAKFSEFLIVAEMIPERRSLELEVSLDGIHFATGKFPPSMHPETHAYTVLESSTKSLFLHMTMSEAPAPFWGNILKSNSNGTYFGLALENVNRDERGYVDFEKMIGLDGIALVNVVSNPTDATLSGHKQLQSRITHNDGSTWRPLTPPVVDSQGNKYSCEGTKCALHIHGYTERMDPRATYSSPSIVGVLMAVGNVGETLAPYTESDTFLSRDAGFTWQEVHKDAHLWEFGDSGSILVLANDEEPTDHILFSTDEGLTWREYKFTEEKMRVRSIVTIPSDTSRRFILFGSLMRTPGSIAVHIDFTQLTSRKCDLSTDNPAKDDFEMWSPSENRPEQCLFGRQTLYHRRIRNTDCTVGEQEKAASRVVLNCACSKVDFECEFNHVKNTNDECELVPGTTPLPDSDTACRNGEEFWYERTAYRLIPYSSCTDGERPDRGREHRCPGFKSHSAWFWLFMLLLPFGFTALIAFYYYRRSGLARGTIRLPGDGGRPAYGGDTGVVATLASVPWFIVGVAGIAWEWVVSHVERLAPGARSGYRNLPIDEDAQVLRFEDED</sequence>
<comment type="function">
    <text evidence="1">Functions as a sorting receptor in the Golgi compartment required for the intracellular sorting and delivery of soluble vacuolar proteins, like carboxypeptidase Y (CPY) and proteinase A. Executes multiple rounds of sorting by cycling between the late Golgi and a prevacuolar endosome-like compartment (By similarity).</text>
</comment>
<comment type="subcellular location">
    <subcellularLocation>
        <location evidence="1">Golgi apparatus</location>
        <location evidence="1">trans-Golgi network membrane</location>
        <topology evidence="1">Multi-pass membrane protein</topology>
    </subcellularLocation>
    <subcellularLocation>
        <location evidence="1">Prevacuolar compartment membrane</location>
        <topology evidence="1">Multi-pass membrane protein</topology>
    </subcellularLocation>
    <text evidence="1">Cycles between the Golgi apparatus and the prevacuolar compartment.</text>
</comment>
<comment type="similarity">
    <text evidence="3">Belongs to the VPS10-related sortilin family.</text>
</comment>
<dbReference type="EMBL" id="DS547190">
    <property type="protein sequence ID" value="EDQ98838.1"/>
    <property type="molecule type" value="Genomic_DNA"/>
</dbReference>
<dbReference type="RefSeq" id="XP_001890509.1">
    <property type="nucleotide sequence ID" value="XM_001890474.1"/>
</dbReference>
<dbReference type="SMR" id="B0E2U2"/>
<dbReference type="FunCoup" id="B0E2U2">
    <property type="interactions" value="113"/>
</dbReference>
<dbReference type="GlyCosmos" id="B0E2U2">
    <property type="glycosylation" value="2 sites, No reported glycans"/>
</dbReference>
<dbReference type="GeneID" id="6086167"/>
<dbReference type="KEGG" id="lbc:LACBIDRAFT_192355"/>
<dbReference type="HOGENOM" id="CLU_000700_0_0_1"/>
<dbReference type="InParanoid" id="B0E2U2"/>
<dbReference type="OrthoDB" id="443634at2759"/>
<dbReference type="Proteomes" id="UP000001194">
    <property type="component" value="Unassembled WGS sequence"/>
</dbReference>
<dbReference type="GO" id="GO:0005829">
    <property type="term" value="C:cytosol"/>
    <property type="evidence" value="ECO:0007669"/>
    <property type="project" value="GOC"/>
</dbReference>
<dbReference type="GO" id="GO:0005794">
    <property type="term" value="C:Golgi apparatus"/>
    <property type="evidence" value="ECO:0007669"/>
    <property type="project" value="UniProtKB-SubCell"/>
</dbReference>
<dbReference type="GO" id="GO:0016020">
    <property type="term" value="C:membrane"/>
    <property type="evidence" value="ECO:0007669"/>
    <property type="project" value="UniProtKB-KW"/>
</dbReference>
<dbReference type="GO" id="GO:0006895">
    <property type="term" value="P:Golgi to endosome transport"/>
    <property type="evidence" value="ECO:0007669"/>
    <property type="project" value="TreeGrafter"/>
</dbReference>
<dbReference type="GO" id="GO:0006896">
    <property type="term" value="P:Golgi to vacuole transport"/>
    <property type="evidence" value="ECO:0007669"/>
    <property type="project" value="TreeGrafter"/>
</dbReference>
<dbReference type="GO" id="GO:0006623">
    <property type="term" value="P:protein targeting to vacuole"/>
    <property type="evidence" value="ECO:0007669"/>
    <property type="project" value="TreeGrafter"/>
</dbReference>
<dbReference type="FunFam" id="3.30.60.270:FF:000005">
    <property type="entry name" value="Sortilin"/>
    <property type="match status" value="1"/>
</dbReference>
<dbReference type="FunFam" id="2.10.70.80:FF:000001">
    <property type="entry name" value="Sortilin-related VPS10 domain-containing receptor 1"/>
    <property type="match status" value="1"/>
</dbReference>
<dbReference type="Gene3D" id="2.10.70.80">
    <property type="match status" value="2"/>
</dbReference>
<dbReference type="Gene3D" id="3.30.60.270">
    <property type="match status" value="2"/>
</dbReference>
<dbReference type="Gene3D" id="2.130.10.10">
    <property type="entry name" value="YVTN repeat-like/Quinoprotein amine dehydrogenase"/>
    <property type="match status" value="2"/>
</dbReference>
<dbReference type="InterPro" id="IPR031777">
    <property type="entry name" value="Sortilin_C"/>
</dbReference>
<dbReference type="InterPro" id="IPR031778">
    <property type="entry name" value="Sortilin_N"/>
</dbReference>
<dbReference type="InterPro" id="IPR006581">
    <property type="entry name" value="VPS10"/>
</dbReference>
<dbReference type="InterPro" id="IPR050310">
    <property type="entry name" value="VPS10-sortilin"/>
</dbReference>
<dbReference type="InterPro" id="IPR015943">
    <property type="entry name" value="WD40/YVTN_repeat-like_dom_sf"/>
</dbReference>
<dbReference type="PANTHER" id="PTHR12106">
    <property type="entry name" value="SORTILIN RELATED"/>
    <property type="match status" value="1"/>
</dbReference>
<dbReference type="PANTHER" id="PTHR12106:SF27">
    <property type="entry name" value="SORTILIN-RELATED RECEPTOR"/>
    <property type="match status" value="1"/>
</dbReference>
<dbReference type="Pfam" id="PF15902">
    <property type="entry name" value="Sortilin-Vps10"/>
    <property type="match status" value="2"/>
</dbReference>
<dbReference type="Pfam" id="PF15901">
    <property type="entry name" value="Sortilin_C"/>
    <property type="match status" value="2"/>
</dbReference>
<dbReference type="SMART" id="SM00602">
    <property type="entry name" value="VPS10"/>
    <property type="match status" value="2"/>
</dbReference>
<dbReference type="SUPFAM" id="SSF110296">
    <property type="entry name" value="Oligoxyloglucan reducing end-specific cellobiohydrolase"/>
    <property type="match status" value="2"/>
</dbReference>